<geneLocation type="plasmid">
    <name>pSG1</name>
</geneLocation>
<feature type="chain" id="PRO_0000265059" description="Putative 3-methyladenine DNA glycosylase">
    <location>
        <begin position="1"/>
        <end position="170"/>
    </location>
</feature>
<evidence type="ECO:0000255" key="1">
    <source>
        <dbReference type="HAMAP-Rule" id="MF_00527"/>
    </source>
</evidence>
<reference key="1">
    <citation type="journal article" date="2005" name="J. Bacteriol.">
        <title>Extrachromosomal DNA of the symbiont Sodalis glossinidius.</title>
        <authorList>
            <person name="Darby A.C."/>
            <person name="Lagnel J."/>
            <person name="Matthew C.Z."/>
            <person name="Bourtzis K."/>
            <person name="Maudlin I."/>
            <person name="Welburn S.C."/>
        </authorList>
    </citation>
    <scope>NUCLEOTIDE SEQUENCE [GENOMIC DNA]</scope>
    <source>
        <plasmid>pSG1</plasmid>
    </source>
</reference>
<organism>
    <name type="scientific">Sodalis glossinidius</name>
    <dbReference type="NCBI Taxonomy" id="63612"/>
    <lineage>
        <taxon>Bacteria</taxon>
        <taxon>Pseudomonadati</taxon>
        <taxon>Pseudomonadota</taxon>
        <taxon>Gammaproteobacteria</taxon>
        <taxon>Enterobacterales</taxon>
        <taxon>Bruguierivoracaceae</taxon>
        <taxon>Sodalis</taxon>
    </lineage>
</organism>
<accession>Q4LBY8</accession>
<comment type="similarity">
    <text evidence="1">Belongs to the DNA glycosylase MPG family.</text>
</comment>
<dbReference type="EC" id="3.2.2.-" evidence="1"/>
<dbReference type="EMBL" id="AJ868434">
    <property type="protein sequence ID" value="CAI59516.1"/>
    <property type="molecule type" value="Genomic_DNA"/>
</dbReference>
<dbReference type="EMBL" id="AJ868433">
    <property type="protein sequence ID" value="CAI59343.1"/>
    <property type="molecule type" value="Genomic_DNA"/>
</dbReference>
<dbReference type="RefSeq" id="WP_011279210.1">
    <property type="nucleotide sequence ID" value="NC_007183.1"/>
</dbReference>
<dbReference type="RefSeq" id="YP_257000.1">
    <property type="nucleotide sequence ID" value="NC_007182.1"/>
</dbReference>
<dbReference type="RefSeq" id="YP_257064.1">
    <property type="nucleotide sequence ID" value="NC_007183.1"/>
</dbReference>
<dbReference type="SMR" id="Q4LBY8"/>
<dbReference type="GO" id="GO:0003905">
    <property type="term" value="F:alkylbase DNA N-glycosylase activity"/>
    <property type="evidence" value="ECO:0007669"/>
    <property type="project" value="InterPro"/>
</dbReference>
<dbReference type="GO" id="GO:0003677">
    <property type="term" value="F:DNA binding"/>
    <property type="evidence" value="ECO:0007669"/>
    <property type="project" value="InterPro"/>
</dbReference>
<dbReference type="GO" id="GO:0006284">
    <property type="term" value="P:base-excision repair"/>
    <property type="evidence" value="ECO:0007669"/>
    <property type="project" value="InterPro"/>
</dbReference>
<dbReference type="CDD" id="cd00540">
    <property type="entry name" value="AAG"/>
    <property type="match status" value="1"/>
</dbReference>
<dbReference type="Gene3D" id="3.10.300.10">
    <property type="entry name" value="Methylpurine-DNA glycosylase (MPG)"/>
    <property type="match status" value="2"/>
</dbReference>
<dbReference type="HAMAP" id="MF_00527">
    <property type="entry name" value="3MGH"/>
    <property type="match status" value="1"/>
</dbReference>
<dbReference type="InterPro" id="IPR011034">
    <property type="entry name" value="Formyl_transferase-like_C_sf"/>
</dbReference>
<dbReference type="InterPro" id="IPR003180">
    <property type="entry name" value="MPG"/>
</dbReference>
<dbReference type="InterPro" id="IPR036995">
    <property type="entry name" value="MPG_sf"/>
</dbReference>
<dbReference type="NCBIfam" id="TIGR00567">
    <property type="entry name" value="3mg"/>
    <property type="match status" value="1"/>
</dbReference>
<dbReference type="NCBIfam" id="NF002004">
    <property type="entry name" value="PRK00802.1-4"/>
    <property type="match status" value="1"/>
</dbReference>
<dbReference type="PANTHER" id="PTHR10429">
    <property type="entry name" value="DNA-3-METHYLADENINE GLYCOSYLASE"/>
    <property type="match status" value="1"/>
</dbReference>
<dbReference type="PANTHER" id="PTHR10429:SF0">
    <property type="entry name" value="DNA-3-METHYLADENINE GLYCOSYLASE"/>
    <property type="match status" value="1"/>
</dbReference>
<dbReference type="Pfam" id="PF02245">
    <property type="entry name" value="Pur_DNA_glyco"/>
    <property type="match status" value="1"/>
</dbReference>
<dbReference type="SUPFAM" id="SSF50486">
    <property type="entry name" value="FMT C-terminal domain-like"/>
    <property type="match status" value="1"/>
</dbReference>
<sequence>MLSNTILSRSFYKRDTLCVAKDLLGKVLKFADYYGVINEVEAYIGQDDPACHAARGYTPRTAAMFGAAGFSYVYLIYGMYHCLNIVTEREGFPAAVLIRGIDLYKPTVLSLNGPGKLCKKLNITKNNNKIDLTQSHGFCVYNTTARPEYMATPRIGIKVGTDKLWRFKSM</sequence>
<keyword id="KW-0227">DNA damage</keyword>
<keyword id="KW-0234">DNA repair</keyword>
<keyword id="KW-0378">Hydrolase</keyword>
<keyword id="KW-0614">Plasmid</keyword>
<protein>
    <recommendedName>
        <fullName evidence="1">Putative 3-methyladenine DNA glycosylase</fullName>
        <ecNumber evidence="1">3.2.2.-</ecNumber>
    </recommendedName>
</protein>
<name>3MGH_SODGL</name>
<proteinExistence type="inferred from homology"/>
<gene>
    <name type="ORF">pSG1.74</name>
</gene>